<evidence type="ECO:0000250" key="1"/>
<evidence type="ECO:0000255" key="2">
    <source>
        <dbReference type="PROSITE-ProRule" id="PRU01082"/>
    </source>
</evidence>
<evidence type="ECO:0000305" key="3"/>
<comment type="function">
    <text>Enzyme with a broad specificity.</text>
</comment>
<comment type="catalytic activity">
    <reaction>
        <text>O-phospho-L-seryl-[protein] + H2O = L-seryl-[protein] + phosphate</text>
        <dbReference type="Rhea" id="RHEA:20629"/>
        <dbReference type="Rhea" id="RHEA-COMP:9863"/>
        <dbReference type="Rhea" id="RHEA-COMP:11604"/>
        <dbReference type="ChEBI" id="CHEBI:15377"/>
        <dbReference type="ChEBI" id="CHEBI:29999"/>
        <dbReference type="ChEBI" id="CHEBI:43474"/>
        <dbReference type="ChEBI" id="CHEBI:83421"/>
        <dbReference type="EC" id="3.1.3.16"/>
    </reaction>
</comment>
<comment type="catalytic activity">
    <reaction>
        <text>O-phospho-L-threonyl-[protein] + H2O = L-threonyl-[protein] + phosphate</text>
        <dbReference type="Rhea" id="RHEA:47004"/>
        <dbReference type="Rhea" id="RHEA-COMP:11060"/>
        <dbReference type="Rhea" id="RHEA-COMP:11605"/>
        <dbReference type="ChEBI" id="CHEBI:15377"/>
        <dbReference type="ChEBI" id="CHEBI:30013"/>
        <dbReference type="ChEBI" id="CHEBI:43474"/>
        <dbReference type="ChEBI" id="CHEBI:61977"/>
        <dbReference type="EC" id="3.1.3.16"/>
    </reaction>
</comment>
<comment type="cofactor">
    <cofactor evidence="1">
        <name>Mg(2+)</name>
        <dbReference type="ChEBI" id="CHEBI:18420"/>
    </cofactor>
    <cofactor evidence="1">
        <name>Mn(2+)</name>
        <dbReference type="ChEBI" id="CHEBI:29035"/>
    </cofactor>
    <text evidence="1">Binds 2 magnesium or manganese ions per subunit.</text>
</comment>
<comment type="subunit">
    <text evidence="1">Monomer.</text>
</comment>
<comment type="developmental stage">
    <text>Found in infective promastigote and in tissue amastigote stages.</text>
</comment>
<comment type="similarity">
    <text evidence="3">Belongs to the PP2C family.</text>
</comment>
<accession>P36982</accession>
<dbReference type="EC" id="3.1.3.16"/>
<dbReference type="EMBL" id="L15559">
    <property type="protein sequence ID" value="AAA02864.1"/>
    <property type="molecule type" value="Unassigned_DNA"/>
</dbReference>
<dbReference type="PIR" id="A47492">
    <property type="entry name" value="A47492"/>
</dbReference>
<dbReference type="SMR" id="P36982"/>
<dbReference type="GO" id="GO:0046872">
    <property type="term" value="F:metal ion binding"/>
    <property type="evidence" value="ECO:0007669"/>
    <property type="project" value="UniProtKB-KW"/>
</dbReference>
<dbReference type="GO" id="GO:0004722">
    <property type="term" value="F:protein serine/threonine phosphatase activity"/>
    <property type="evidence" value="ECO:0007669"/>
    <property type="project" value="UniProtKB-EC"/>
</dbReference>
<dbReference type="CDD" id="cd00143">
    <property type="entry name" value="PP2Cc"/>
    <property type="match status" value="1"/>
</dbReference>
<dbReference type="FunFam" id="3.60.40.10:FF:000073">
    <property type="entry name" value="Putative phosphatase 2C"/>
    <property type="match status" value="1"/>
</dbReference>
<dbReference type="Gene3D" id="3.60.40.10">
    <property type="entry name" value="PPM-type phosphatase domain"/>
    <property type="match status" value="1"/>
</dbReference>
<dbReference type="InterPro" id="IPR015655">
    <property type="entry name" value="PP2C"/>
</dbReference>
<dbReference type="InterPro" id="IPR000222">
    <property type="entry name" value="PP2C_BS"/>
</dbReference>
<dbReference type="InterPro" id="IPR036457">
    <property type="entry name" value="PPM-type-like_dom_sf"/>
</dbReference>
<dbReference type="InterPro" id="IPR001932">
    <property type="entry name" value="PPM-type_phosphatase-like_dom"/>
</dbReference>
<dbReference type="PANTHER" id="PTHR47992">
    <property type="entry name" value="PROTEIN PHOSPHATASE"/>
    <property type="match status" value="1"/>
</dbReference>
<dbReference type="Pfam" id="PF00481">
    <property type="entry name" value="PP2C"/>
    <property type="match status" value="1"/>
</dbReference>
<dbReference type="SMART" id="SM00332">
    <property type="entry name" value="PP2Cc"/>
    <property type="match status" value="1"/>
</dbReference>
<dbReference type="SUPFAM" id="SSF81606">
    <property type="entry name" value="PP2C-like"/>
    <property type="match status" value="1"/>
</dbReference>
<dbReference type="PROSITE" id="PS01032">
    <property type="entry name" value="PPM_1"/>
    <property type="match status" value="1"/>
</dbReference>
<dbReference type="PROSITE" id="PS51746">
    <property type="entry name" value="PPM_2"/>
    <property type="match status" value="1"/>
</dbReference>
<sequence length="406" mass="45139">MGIPLPKPVMTQLQERYGNAIFRCGSNCVNGYRETMEDAHLTYLTDSWGFFGVFDGHVNDQCSQYLERAWRSAIEKESIPMTDERMKELALRIDQEWMDSGREGGSTGTFFVALKEGNKVHLQVGNVGDSRVVACIDGVCVPLTEDHKPNNEGERQRIENCAGRVENNRVDGSLAVSRAFGDREYKLGSGSQLEQKVIALADVQHKDFTFDSNDFVLLCCDGVFEGNFPNEEVVAYVKQQLETCNDLAEVAGRVCEEAIERGSRDNISCMIVQFKDGSDYAAEPHTTVVPGPFSAPRNSGFRKAYESMADKGNTTVGALLERRYDTLKAAEALTPEETEELSQFENGPEAKLTGAERQKWFSNYFQKLCEAASNGPSDQMERLQSLQQQAGIPLSILLSLMGEQTQ</sequence>
<name>PP2C_LEICH</name>
<keyword id="KW-0378">Hydrolase</keyword>
<keyword id="KW-0460">Magnesium</keyword>
<keyword id="KW-0464">Manganese</keyword>
<keyword id="KW-0479">Metal-binding</keyword>
<keyword id="KW-0904">Protein phosphatase</keyword>
<reference key="1">
    <citation type="journal article" date="1993" name="J. Biol. Chem.">
        <title>Molecular cloning and characterization of a 42-kDa protein phosphatase of Leishmania chagasi.</title>
        <authorList>
            <person name="Burns J.M. Jr."/>
            <person name="Parsons M."/>
            <person name="Rosman D.E."/>
            <person name="Reed S.G."/>
        </authorList>
    </citation>
    <scope>NUCLEOTIDE SEQUENCE</scope>
    <source>
        <strain>MHOM/BR/82/BA-2</strain>
    </source>
</reference>
<proteinExistence type="evidence at transcript level"/>
<protein>
    <recommendedName>
        <fullName>Protein phosphatase 2C</fullName>
        <shortName>PP2C</shortName>
        <ecNumber>3.1.3.16</ecNumber>
    </recommendedName>
</protein>
<organism>
    <name type="scientific">Leishmania chagasi</name>
    <dbReference type="NCBI Taxonomy" id="44271"/>
    <lineage>
        <taxon>Eukaryota</taxon>
        <taxon>Discoba</taxon>
        <taxon>Euglenozoa</taxon>
        <taxon>Kinetoplastea</taxon>
        <taxon>Metakinetoplastina</taxon>
        <taxon>Trypanosomatida</taxon>
        <taxon>Trypanosomatidae</taxon>
        <taxon>Leishmaniinae</taxon>
        <taxon>Leishmania</taxon>
    </lineage>
</organism>
<feature type="chain" id="PRO_0000057764" description="Protein phosphatase 2C">
    <location>
        <begin position="1"/>
        <end position="406"/>
    </location>
</feature>
<feature type="domain" description="PPM-type phosphatase" evidence="2">
    <location>
        <begin position="23"/>
        <end position="274"/>
    </location>
</feature>
<feature type="binding site" evidence="1">
    <location>
        <position position="55"/>
    </location>
    <ligand>
        <name>Mn(2+)</name>
        <dbReference type="ChEBI" id="CHEBI:29035"/>
        <label>1</label>
    </ligand>
</feature>
<feature type="binding site" evidence="1">
    <location>
        <position position="55"/>
    </location>
    <ligand>
        <name>Mn(2+)</name>
        <dbReference type="ChEBI" id="CHEBI:29035"/>
        <label>2</label>
    </ligand>
</feature>
<feature type="binding site" evidence="1">
    <location>
        <position position="56"/>
    </location>
    <ligand>
        <name>Mn(2+)</name>
        <dbReference type="ChEBI" id="CHEBI:29035"/>
        <label>1</label>
    </ligand>
</feature>
<feature type="binding site" evidence="1">
    <location>
        <position position="221"/>
    </location>
    <ligand>
        <name>Mn(2+)</name>
        <dbReference type="ChEBI" id="CHEBI:29035"/>
        <label>2</label>
    </ligand>
</feature>
<feature type="binding site" evidence="1">
    <location>
        <position position="265"/>
    </location>
    <ligand>
        <name>Mn(2+)</name>
        <dbReference type="ChEBI" id="CHEBI:29035"/>
        <label>2</label>
    </ligand>
</feature>